<dbReference type="EC" id="6.3.1.2"/>
<dbReference type="EMBL" id="AF411820">
    <property type="protein sequence ID" value="AAK96111.1"/>
    <property type="molecule type" value="mRNA"/>
</dbReference>
<dbReference type="SMR" id="Q96UV5"/>
<dbReference type="GO" id="GO:0005737">
    <property type="term" value="C:cytoplasm"/>
    <property type="evidence" value="ECO:0007669"/>
    <property type="project" value="UniProtKB-SubCell"/>
</dbReference>
<dbReference type="GO" id="GO:0005524">
    <property type="term" value="F:ATP binding"/>
    <property type="evidence" value="ECO:0007669"/>
    <property type="project" value="UniProtKB-KW"/>
</dbReference>
<dbReference type="GO" id="GO:0004356">
    <property type="term" value="F:glutamine synthetase activity"/>
    <property type="evidence" value="ECO:0007669"/>
    <property type="project" value="UniProtKB-EC"/>
</dbReference>
<dbReference type="GO" id="GO:0006542">
    <property type="term" value="P:glutamine biosynthetic process"/>
    <property type="evidence" value="ECO:0007669"/>
    <property type="project" value="InterPro"/>
</dbReference>
<dbReference type="FunFam" id="3.10.20.70:FF:000004">
    <property type="entry name" value="Glutamine synthetase"/>
    <property type="match status" value="1"/>
</dbReference>
<dbReference type="FunFam" id="3.30.590.10:FF:000004">
    <property type="entry name" value="Glutamine synthetase"/>
    <property type="match status" value="1"/>
</dbReference>
<dbReference type="Gene3D" id="3.10.20.70">
    <property type="entry name" value="Glutamine synthetase, N-terminal domain"/>
    <property type="match status" value="1"/>
</dbReference>
<dbReference type="Gene3D" id="3.30.590.10">
    <property type="entry name" value="Glutamine synthetase/guanido kinase, catalytic domain"/>
    <property type="match status" value="1"/>
</dbReference>
<dbReference type="InterPro" id="IPR008147">
    <property type="entry name" value="Gln_synt_N"/>
</dbReference>
<dbReference type="InterPro" id="IPR036651">
    <property type="entry name" value="Gln_synt_N_sf"/>
</dbReference>
<dbReference type="InterPro" id="IPR014746">
    <property type="entry name" value="Gln_synth/guanido_kin_cat_dom"/>
</dbReference>
<dbReference type="InterPro" id="IPR008146">
    <property type="entry name" value="Gln_synth_cat_dom"/>
</dbReference>
<dbReference type="InterPro" id="IPR027303">
    <property type="entry name" value="Gln_synth_gly_rich_site"/>
</dbReference>
<dbReference type="InterPro" id="IPR027302">
    <property type="entry name" value="Gln_synth_N_conserv_site"/>
</dbReference>
<dbReference type="InterPro" id="IPR050292">
    <property type="entry name" value="Glutamine_Synthetase"/>
</dbReference>
<dbReference type="PANTHER" id="PTHR20852">
    <property type="entry name" value="GLUTAMINE SYNTHETASE"/>
    <property type="match status" value="1"/>
</dbReference>
<dbReference type="PANTHER" id="PTHR20852:SF57">
    <property type="entry name" value="GLUTAMINE SYNTHETASE 2 CYTOPLASMIC"/>
    <property type="match status" value="1"/>
</dbReference>
<dbReference type="Pfam" id="PF00120">
    <property type="entry name" value="Gln-synt_C"/>
    <property type="match status" value="1"/>
</dbReference>
<dbReference type="Pfam" id="PF03951">
    <property type="entry name" value="Gln-synt_N"/>
    <property type="match status" value="1"/>
</dbReference>
<dbReference type="SMART" id="SM01230">
    <property type="entry name" value="Gln-synt_C"/>
    <property type="match status" value="1"/>
</dbReference>
<dbReference type="SUPFAM" id="SSF54368">
    <property type="entry name" value="Glutamine synthetase, N-terminal domain"/>
    <property type="match status" value="1"/>
</dbReference>
<dbReference type="SUPFAM" id="SSF55931">
    <property type="entry name" value="Glutamine synthetase/guanido kinase"/>
    <property type="match status" value="1"/>
</dbReference>
<dbReference type="PROSITE" id="PS00180">
    <property type="entry name" value="GLNA_1"/>
    <property type="match status" value="1"/>
</dbReference>
<dbReference type="PROSITE" id="PS00181">
    <property type="entry name" value="GLNA_ATP"/>
    <property type="match status" value="1"/>
</dbReference>
<dbReference type="PROSITE" id="PS51986">
    <property type="entry name" value="GS_BETA_GRASP"/>
    <property type="match status" value="1"/>
</dbReference>
<dbReference type="PROSITE" id="PS51987">
    <property type="entry name" value="GS_CATALYTIC"/>
    <property type="match status" value="1"/>
</dbReference>
<keyword id="KW-0067">ATP-binding</keyword>
<keyword id="KW-0963">Cytoplasm</keyword>
<keyword id="KW-0436">Ligase</keyword>
<keyword id="KW-0547">Nucleotide-binding</keyword>
<sequence>MAYRYHNDLLAPYLALPQGDKIQAEYVWVDGDGGLRSKTTTVSKKVTDIGSLRIWDFDGSSTNQAPGHDSDVYLRPAAIFKDPFRGGDNILVLAETYNSDGTPNRTNFRHHAAKVMEQAKEDVPWFGLEQEYTLFDADGSPYGWPKGGFPGPQGPYYCGAGTGKVFARDLIEAHYRACLYSGINISGINAEVMPSQWEFQVGPCEGISMGDHLWMARYLLVRIAEQWAVKVSFHPKPLQGDWNGAGCHTNYSTKAMREPGGMKVIEEAIEKLSKRHDEHIAVYGEDNDLRLTGRHETGHIGAFSSGVANRGASIRVPRHVAAQGYGYLEDRRPASNIDPYRVTSIIVETTLLNA</sequence>
<proteinExistence type="evidence at transcript level"/>
<name>GLNA_HEBCY</name>
<reference key="1">
    <citation type="submission" date="2001-07" db="EMBL/GenBank/DDBJ databases">
        <title>Nucleotide sequence and expression of NADP-GDH and GS from the ectomycorrhizal fungus Hebeloma cylindrosporum.</title>
        <authorList>
            <person name="Rodriguez-Pastrana B."/>
            <person name="Javelle A."/>
            <person name="Belleville R."/>
            <person name="Morel M."/>
            <person name="Botton B."/>
            <person name="Jacob C."/>
            <person name="Chalot M."/>
            <person name="Brun A."/>
        </authorList>
    </citation>
    <scope>NUCLEOTIDE SEQUENCE [MRNA]</scope>
    <source>
        <strain>h1</strain>
    </source>
</reference>
<gene>
    <name type="primary">GLN1</name>
</gene>
<comment type="catalytic activity">
    <reaction>
        <text>L-glutamate + NH4(+) + ATP = L-glutamine + ADP + phosphate + H(+)</text>
        <dbReference type="Rhea" id="RHEA:16169"/>
        <dbReference type="ChEBI" id="CHEBI:15378"/>
        <dbReference type="ChEBI" id="CHEBI:28938"/>
        <dbReference type="ChEBI" id="CHEBI:29985"/>
        <dbReference type="ChEBI" id="CHEBI:30616"/>
        <dbReference type="ChEBI" id="CHEBI:43474"/>
        <dbReference type="ChEBI" id="CHEBI:58359"/>
        <dbReference type="ChEBI" id="CHEBI:456216"/>
        <dbReference type="EC" id="6.3.1.2"/>
    </reaction>
</comment>
<comment type="subunit">
    <text evidence="1">Homooctamer.</text>
</comment>
<comment type="subcellular location">
    <subcellularLocation>
        <location evidence="1">Cytoplasm</location>
    </subcellularLocation>
</comment>
<comment type="similarity">
    <text evidence="4">Belongs to the glutamine synthetase family.</text>
</comment>
<feature type="chain" id="PRO_0000153159" description="Glutamine synthetase">
    <location>
        <begin position="1"/>
        <end position="354"/>
    </location>
</feature>
<feature type="domain" description="GS beta-grasp" evidence="2">
    <location>
        <begin position="22"/>
        <end position="101"/>
    </location>
</feature>
<feature type="domain" description="GS catalytic" evidence="3">
    <location>
        <begin position="108"/>
        <end position="354"/>
    </location>
</feature>
<evidence type="ECO:0000250" key="1"/>
<evidence type="ECO:0000255" key="2">
    <source>
        <dbReference type="PROSITE-ProRule" id="PRU01330"/>
    </source>
</evidence>
<evidence type="ECO:0000255" key="3">
    <source>
        <dbReference type="PROSITE-ProRule" id="PRU01331"/>
    </source>
</evidence>
<evidence type="ECO:0000305" key="4"/>
<organism>
    <name type="scientific">Hebeloma cylindrosporum</name>
    <dbReference type="NCBI Taxonomy" id="76867"/>
    <lineage>
        <taxon>Eukaryota</taxon>
        <taxon>Fungi</taxon>
        <taxon>Dikarya</taxon>
        <taxon>Basidiomycota</taxon>
        <taxon>Agaricomycotina</taxon>
        <taxon>Agaricomycetes</taxon>
        <taxon>Agaricomycetidae</taxon>
        <taxon>Agaricales</taxon>
        <taxon>Agaricineae</taxon>
        <taxon>Hymenogastraceae</taxon>
        <taxon>Hebeloma</taxon>
    </lineage>
</organism>
<protein>
    <recommendedName>
        <fullName>Glutamine synthetase</fullName>
        <shortName>GS</shortName>
        <ecNumber>6.3.1.2</ecNumber>
    </recommendedName>
    <alternativeName>
        <fullName>Glutamate--ammonia ligase</fullName>
    </alternativeName>
</protein>
<accession>Q96UV5</accession>